<gene>
    <name evidence="1" type="primary">dinB</name>
    <name type="ordered locus">TDE_0963</name>
</gene>
<name>DPO4_TREDE</name>
<protein>
    <recommendedName>
        <fullName evidence="1">DNA polymerase IV</fullName>
        <shortName evidence="1">Pol IV</shortName>
        <ecNumber evidence="1">2.7.7.7</ecNumber>
    </recommendedName>
</protein>
<keyword id="KW-0963">Cytoplasm</keyword>
<keyword id="KW-0227">DNA damage</keyword>
<keyword id="KW-0234">DNA repair</keyword>
<keyword id="KW-0235">DNA replication</keyword>
<keyword id="KW-0238">DNA-binding</keyword>
<keyword id="KW-0239">DNA-directed DNA polymerase</keyword>
<keyword id="KW-0460">Magnesium</keyword>
<keyword id="KW-0479">Metal-binding</keyword>
<keyword id="KW-0515">Mutator protein</keyword>
<keyword id="KW-0548">Nucleotidyltransferase</keyword>
<keyword id="KW-1185">Reference proteome</keyword>
<keyword id="KW-0808">Transferase</keyword>
<accession>Q73P36</accession>
<organism>
    <name type="scientific">Treponema denticola (strain ATCC 35405 / DSM 14222 / CIP 103919 / JCM 8153 / KCTC 15104)</name>
    <dbReference type="NCBI Taxonomy" id="243275"/>
    <lineage>
        <taxon>Bacteria</taxon>
        <taxon>Pseudomonadati</taxon>
        <taxon>Spirochaetota</taxon>
        <taxon>Spirochaetia</taxon>
        <taxon>Spirochaetales</taxon>
        <taxon>Treponemataceae</taxon>
        <taxon>Treponema</taxon>
    </lineage>
</organism>
<sequence length="395" mass="44581">MATEKVFFHVDIDAFFASVEQLDNPEYMGKPVIVGGQSERGVVSTCSYEARKFGVHSAMPILQARKLCPSGIFLRGRMDRYHEKSKEVMSIFKDFTPEIKQISVDEAFLNMTGMEKIFGTPKNSALLLKKTIKEETGLTVSVGCAQNKYIAKIASGRSKPDGLFIVKAGEEIDFMKSLPLKDVWGVGGKTRERLIAAGLTSVPQIFNSSEHLLQSILGNASGSFLFQAVRGELYDVFSDDVKSHSISTERTFEHDLFSHAEIDDVMFYLASELMYRIFDEKVKGKTVSVKIRYNDFTTVSVQSTGAVVNDTQDLFERARELFYKKFDNKTPIRLLGLCIMNIESDIPEAQTELFYSEKNVKKRKIEETMYTLTKKEGKNILKPARLLKKDKDGLE</sequence>
<comment type="function">
    <text evidence="1">Poorly processive, error-prone DNA polymerase involved in untargeted mutagenesis. Copies undamaged DNA at stalled replication forks, which arise in vivo from mismatched or misaligned primer ends. These misaligned primers can be extended by PolIV. Exhibits no 3'-5' exonuclease (proofreading) activity. May be involved in translesional synthesis, in conjunction with the beta clamp from PolIII.</text>
</comment>
<comment type="catalytic activity">
    <reaction evidence="1">
        <text>DNA(n) + a 2'-deoxyribonucleoside 5'-triphosphate = DNA(n+1) + diphosphate</text>
        <dbReference type="Rhea" id="RHEA:22508"/>
        <dbReference type="Rhea" id="RHEA-COMP:17339"/>
        <dbReference type="Rhea" id="RHEA-COMP:17340"/>
        <dbReference type="ChEBI" id="CHEBI:33019"/>
        <dbReference type="ChEBI" id="CHEBI:61560"/>
        <dbReference type="ChEBI" id="CHEBI:173112"/>
        <dbReference type="EC" id="2.7.7.7"/>
    </reaction>
</comment>
<comment type="cofactor">
    <cofactor evidence="1">
        <name>Mg(2+)</name>
        <dbReference type="ChEBI" id="CHEBI:18420"/>
    </cofactor>
    <text evidence="1">Binds 2 magnesium ions per subunit.</text>
</comment>
<comment type="subunit">
    <text evidence="1">Monomer.</text>
</comment>
<comment type="subcellular location">
    <subcellularLocation>
        <location evidence="1">Cytoplasm</location>
    </subcellularLocation>
</comment>
<comment type="similarity">
    <text evidence="1">Belongs to the DNA polymerase type-Y family.</text>
</comment>
<feature type="chain" id="PRO_1000213591" description="DNA polymerase IV">
    <location>
        <begin position="1"/>
        <end position="395"/>
    </location>
</feature>
<feature type="domain" description="UmuC" evidence="1">
    <location>
        <begin position="7"/>
        <end position="187"/>
    </location>
</feature>
<feature type="active site" evidence="1">
    <location>
        <position position="106"/>
    </location>
</feature>
<feature type="binding site" evidence="1">
    <location>
        <position position="11"/>
    </location>
    <ligand>
        <name>Mg(2+)</name>
        <dbReference type="ChEBI" id="CHEBI:18420"/>
    </ligand>
</feature>
<feature type="binding site" evidence="1">
    <location>
        <position position="105"/>
    </location>
    <ligand>
        <name>Mg(2+)</name>
        <dbReference type="ChEBI" id="CHEBI:18420"/>
    </ligand>
</feature>
<feature type="site" description="Substrate discrimination" evidence="1">
    <location>
        <position position="16"/>
    </location>
</feature>
<reference key="1">
    <citation type="journal article" date="2004" name="Proc. Natl. Acad. Sci. U.S.A.">
        <title>Comparison of the genome of the oral pathogen Treponema denticola with other spirochete genomes.</title>
        <authorList>
            <person name="Seshadri R."/>
            <person name="Myers G.S.A."/>
            <person name="Tettelin H."/>
            <person name="Eisen J.A."/>
            <person name="Heidelberg J.F."/>
            <person name="Dodson R.J."/>
            <person name="Davidsen T.M."/>
            <person name="DeBoy R.T."/>
            <person name="Fouts D.E."/>
            <person name="Haft D.H."/>
            <person name="Selengut J."/>
            <person name="Ren Q."/>
            <person name="Brinkac L.M."/>
            <person name="Madupu R."/>
            <person name="Kolonay J.F."/>
            <person name="Durkin S.A."/>
            <person name="Daugherty S.C."/>
            <person name="Shetty J."/>
            <person name="Shvartsbeyn A."/>
            <person name="Gebregeorgis E."/>
            <person name="Geer K."/>
            <person name="Tsegaye G."/>
            <person name="Malek J.A."/>
            <person name="Ayodeji B."/>
            <person name="Shatsman S."/>
            <person name="McLeod M.P."/>
            <person name="Smajs D."/>
            <person name="Howell J.K."/>
            <person name="Pal S."/>
            <person name="Amin A."/>
            <person name="Vashisth P."/>
            <person name="McNeill T.Z."/>
            <person name="Xiang Q."/>
            <person name="Sodergren E."/>
            <person name="Baca E."/>
            <person name="Weinstock G.M."/>
            <person name="Norris S.J."/>
            <person name="Fraser C.M."/>
            <person name="Paulsen I.T."/>
        </authorList>
    </citation>
    <scope>NUCLEOTIDE SEQUENCE [LARGE SCALE GENOMIC DNA]</scope>
    <source>
        <strain>ATCC 35405 / DSM 14222 / CIP 103919 / JCM 8153 / KCTC 15104</strain>
    </source>
</reference>
<dbReference type="EC" id="2.7.7.7" evidence="1"/>
<dbReference type="EMBL" id="AE017226">
    <property type="protein sequence ID" value="AAS11454.1"/>
    <property type="molecule type" value="Genomic_DNA"/>
</dbReference>
<dbReference type="RefSeq" id="NP_971573.1">
    <property type="nucleotide sequence ID" value="NC_002967.9"/>
</dbReference>
<dbReference type="RefSeq" id="WP_010956849.1">
    <property type="nucleotide sequence ID" value="NC_002967.9"/>
</dbReference>
<dbReference type="SMR" id="Q73P36"/>
<dbReference type="STRING" id="243275.TDE_0963"/>
<dbReference type="PaxDb" id="243275-TDE_0963"/>
<dbReference type="GeneID" id="2740771"/>
<dbReference type="KEGG" id="tde:TDE_0963"/>
<dbReference type="PATRIC" id="fig|243275.7.peg.927"/>
<dbReference type="eggNOG" id="COG0389">
    <property type="taxonomic scope" value="Bacteria"/>
</dbReference>
<dbReference type="HOGENOM" id="CLU_012348_1_2_12"/>
<dbReference type="OrthoDB" id="9808813at2"/>
<dbReference type="Proteomes" id="UP000008212">
    <property type="component" value="Chromosome"/>
</dbReference>
<dbReference type="GO" id="GO:0005829">
    <property type="term" value="C:cytosol"/>
    <property type="evidence" value="ECO:0007669"/>
    <property type="project" value="TreeGrafter"/>
</dbReference>
<dbReference type="GO" id="GO:0003684">
    <property type="term" value="F:damaged DNA binding"/>
    <property type="evidence" value="ECO:0007669"/>
    <property type="project" value="InterPro"/>
</dbReference>
<dbReference type="GO" id="GO:0003887">
    <property type="term" value="F:DNA-directed DNA polymerase activity"/>
    <property type="evidence" value="ECO:0007669"/>
    <property type="project" value="UniProtKB-UniRule"/>
</dbReference>
<dbReference type="GO" id="GO:0000287">
    <property type="term" value="F:magnesium ion binding"/>
    <property type="evidence" value="ECO:0007669"/>
    <property type="project" value="UniProtKB-UniRule"/>
</dbReference>
<dbReference type="GO" id="GO:0006261">
    <property type="term" value="P:DNA-templated DNA replication"/>
    <property type="evidence" value="ECO:0007669"/>
    <property type="project" value="UniProtKB-UniRule"/>
</dbReference>
<dbReference type="GO" id="GO:0042276">
    <property type="term" value="P:error-prone translesion synthesis"/>
    <property type="evidence" value="ECO:0007669"/>
    <property type="project" value="TreeGrafter"/>
</dbReference>
<dbReference type="GO" id="GO:0009432">
    <property type="term" value="P:SOS response"/>
    <property type="evidence" value="ECO:0007669"/>
    <property type="project" value="TreeGrafter"/>
</dbReference>
<dbReference type="CDD" id="cd03586">
    <property type="entry name" value="PolY_Pol_IV_kappa"/>
    <property type="match status" value="1"/>
</dbReference>
<dbReference type="FunFam" id="3.40.1170.60:FF:000001">
    <property type="entry name" value="DNA polymerase IV"/>
    <property type="match status" value="1"/>
</dbReference>
<dbReference type="Gene3D" id="3.30.70.270">
    <property type="match status" value="1"/>
</dbReference>
<dbReference type="Gene3D" id="3.40.1170.60">
    <property type="match status" value="1"/>
</dbReference>
<dbReference type="Gene3D" id="1.10.150.20">
    <property type="entry name" value="5' to 3' exonuclease, C-terminal subdomain"/>
    <property type="match status" value="1"/>
</dbReference>
<dbReference type="Gene3D" id="3.30.1490.100">
    <property type="entry name" value="DNA polymerase, Y-family, little finger domain"/>
    <property type="match status" value="1"/>
</dbReference>
<dbReference type="HAMAP" id="MF_01113">
    <property type="entry name" value="DNApol_IV"/>
    <property type="match status" value="1"/>
</dbReference>
<dbReference type="InterPro" id="IPR043502">
    <property type="entry name" value="DNA/RNA_pol_sf"/>
</dbReference>
<dbReference type="InterPro" id="IPR036775">
    <property type="entry name" value="DNA_pol_Y-fam_lit_finger_sf"/>
</dbReference>
<dbReference type="InterPro" id="IPR017961">
    <property type="entry name" value="DNA_pol_Y-fam_little_finger"/>
</dbReference>
<dbReference type="InterPro" id="IPR050116">
    <property type="entry name" value="DNA_polymerase-Y"/>
</dbReference>
<dbReference type="InterPro" id="IPR022880">
    <property type="entry name" value="DNApol_IV"/>
</dbReference>
<dbReference type="InterPro" id="IPR024728">
    <property type="entry name" value="PolY_HhH_motif"/>
</dbReference>
<dbReference type="InterPro" id="IPR043128">
    <property type="entry name" value="Rev_trsase/Diguanyl_cyclase"/>
</dbReference>
<dbReference type="InterPro" id="IPR001126">
    <property type="entry name" value="UmuC"/>
</dbReference>
<dbReference type="NCBIfam" id="NF002677">
    <property type="entry name" value="PRK02406.1"/>
    <property type="match status" value="1"/>
</dbReference>
<dbReference type="PANTHER" id="PTHR11076:SF33">
    <property type="entry name" value="DNA POLYMERASE KAPPA"/>
    <property type="match status" value="1"/>
</dbReference>
<dbReference type="PANTHER" id="PTHR11076">
    <property type="entry name" value="DNA REPAIR POLYMERASE UMUC / TRANSFERASE FAMILY MEMBER"/>
    <property type="match status" value="1"/>
</dbReference>
<dbReference type="Pfam" id="PF00817">
    <property type="entry name" value="IMS"/>
    <property type="match status" value="1"/>
</dbReference>
<dbReference type="Pfam" id="PF11799">
    <property type="entry name" value="IMS_C"/>
    <property type="match status" value="1"/>
</dbReference>
<dbReference type="Pfam" id="PF11798">
    <property type="entry name" value="IMS_HHH"/>
    <property type="match status" value="1"/>
</dbReference>
<dbReference type="SUPFAM" id="SSF56672">
    <property type="entry name" value="DNA/RNA polymerases"/>
    <property type="match status" value="1"/>
</dbReference>
<dbReference type="SUPFAM" id="SSF100879">
    <property type="entry name" value="Lesion bypass DNA polymerase (Y-family), little finger domain"/>
    <property type="match status" value="1"/>
</dbReference>
<dbReference type="PROSITE" id="PS50173">
    <property type="entry name" value="UMUC"/>
    <property type="match status" value="1"/>
</dbReference>
<proteinExistence type="inferred from homology"/>
<evidence type="ECO:0000255" key="1">
    <source>
        <dbReference type="HAMAP-Rule" id="MF_01113"/>
    </source>
</evidence>